<comment type="function">
    <text evidence="1 3 6 8">Involved in sporulation-specific cell division (PubMed:19567872). Required for early stages of sporulation. Important in the process of growth cessation prior to sporulation-specific cell division (PubMed:12900022). Recruits cell division protein FtsZ to the future septum sites and tethers the contractile ring structure (Z ring) to the cytoplasmic membrane during sporulation (PubMed:21205868). Stimulates polymerization and filament length of FtsZ in vitro (By similarity).</text>
</comment>
<comment type="subunit">
    <text evidence="8">Interacts with SsgA. Interacts with FtsZ (via N-terminus).</text>
</comment>
<comment type="subcellular location">
    <subcellularLocation>
        <location evidence="6 8">Cell septum</location>
    </subcellularLocation>
    <text evidence="6 8">Localizes to the divisome in sporogenic aerial hyphae in a ladder-like manner (PubMed:19567872, PubMed:21205868). Temporospatial localization is controlled by SsgA and it colocalizes with SsgA in presporulation foci. Localizes to the septum sites prior to FtsZ and after that colocalizes with FtsZ at the divisome throughout cell division (PubMed:21205868).</text>
</comment>
<comment type="developmental stage">
    <text evidence="2 5 8 10">Induced at the time of aerial mycelium formation and is most abundant during sporulation (PubMed:12111561). Induced during late aerial growth and early sporulation (PubMed:16262781). Present at early division stages, predivision stage and sporulation stage (PubMed:21205868). Mainly expressed during late development (72 h) corresponding to sporulation stage, but in the presence of whiA mutant its transcription is more than 3-fold reduced and in the presence of whiH mutant it is nearly absent (PubMed:26002075).</text>
</comment>
<comment type="induction">
    <text evidence="2 7">Transcriptionally regulated by stress-response sigma factor SigH of RNA polymerase (PubMed:12111561). Transcriptionally regulated by BldD (PubMed:20979333).</text>
</comment>
<comment type="disruption phenotype">
    <text evidence="3 4 5 6 8 9 10">Does not sporulate as evidenced by the white phenotype of the aerial mycelium compared to the wild-type gray (PubMed:12900022, PubMed:16262781, PubMed:19567872). Produces long non-coiling aerial hyphae typical of developmental mutants arrested in a very early stage of aerial growth (PubMed:19567872). No effect on vegetative growth or production of the pigmented antibiotics undecylprodigiosin and actinorhodin. Aerial hyphae occasionally undergo typical coiling indicating that mutation also affects later stages of the development. Aerial mycelium does not septate into spore compartments (PubMed:14513208). Increased levels of actinorhodin production. Colonies are significantly larger than wild-type and they continue to expand prior to the onset of sporulation whereas in wild-type the growth slows considerably. No DNA segregation. Aerial hyphae show irregularly shaped globular compartments often having tiny side branches, but the compartments are not separated by septa. Significant number of collapsed hyphae. Fails to grow at concentrations of 750 mM NaCl or higher (PubMed:12900022). Does not form Z ladders which are typical of sporulation-specific cell division, but still forms individual septa such as cross-walls in vegetative hyphae (PubMed:21205868). Produces some deformed spore-like bodies when ftsZ is constitutively expressed, but no intact spores are produced and only 41% of them are viable. They are very sensitive to exposure to both heat and lysozyme. The DNA in them has a spiky appearance and is surrounded by an unknown white electron-lucent mass, while the cell wall is as thin as that of aerial hyphae (PubMed:22113698). Transcription of ssgG is constitutive, ssgC transcription is enhanced and transcription of ssgE and ssgF are moderately up-regulated (PubMed:26002075).</text>
</comment>
<comment type="similarity">
    <text evidence="20">Belongs to the SsgA family.</text>
</comment>
<comment type="sequence caution" evidence="20">
    <conflict type="erroneous initiation">
        <sequence resource="EMBL-CDS" id="CAB70943"/>
    </conflict>
    <text>Extended N-terminus.</text>
</comment>
<organism evidence="23">
    <name type="scientific">Streptomyces coelicolor (strain ATCC BAA-471 / A3(2) / M145)</name>
    <dbReference type="NCBI Taxonomy" id="100226"/>
    <lineage>
        <taxon>Bacteria</taxon>
        <taxon>Bacillati</taxon>
        <taxon>Actinomycetota</taxon>
        <taxon>Actinomycetes</taxon>
        <taxon>Kitasatosporales</taxon>
        <taxon>Streptomycetaceae</taxon>
        <taxon>Streptomyces</taxon>
        <taxon>Streptomyces albidoflavus group</taxon>
    </lineage>
</organism>
<proteinExistence type="evidence at protein level"/>
<evidence type="ECO:0000250" key="1">
    <source>
        <dbReference type="UniProtKB" id="Q47N25"/>
    </source>
</evidence>
<evidence type="ECO:0000269" key="2">
    <source>
    </source>
</evidence>
<evidence type="ECO:0000269" key="3">
    <source>
    </source>
</evidence>
<evidence type="ECO:0000269" key="4">
    <source>
    </source>
</evidence>
<evidence type="ECO:0000269" key="5">
    <source>
    </source>
</evidence>
<evidence type="ECO:0000269" key="6">
    <source>
    </source>
</evidence>
<evidence type="ECO:0000269" key="7">
    <source>
    </source>
</evidence>
<evidence type="ECO:0000269" key="8">
    <source>
    </source>
</evidence>
<evidence type="ECO:0000269" key="9">
    <source>
    </source>
</evidence>
<evidence type="ECO:0000269" key="10">
    <source>
    </source>
</evidence>
<evidence type="ECO:0000303" key="11">
    <source>
    </source>
</evidence>
<evidence type="ECO:0000303" key="12">
    <source>
    </source>
</evidence>
<evidence type="ECO:0000303" key="13">
    <source>
    </source>
</evidence>
<evidence type="ECO:0000303" key="14">
    <source>
    </source>
</evidence>
<evidence type="ECO:0000303" key="15">
    <source>
    </source>
</evidence>
<evidence type="ECO:0000303" key="16">
    <source>
    </source>
</evidence>
<evidence type="ECO:0000303" key="17">
    <source>
    </source>
</evidence>
<evidence type="ECO:0000303" key="18">
    <source>
    </source>
</evidence>
<evidence type="ECO:0000303" key="19">
    <source>
    </source>
</evidence>
<evidence type="ECO:0000305" key="20"/>
<evidence type="ECO:0000312" key="21">
    <source>
        <dbReference type="EMBL" id="AAF82065.2"/>
    </source>
</evidence>
<evidence type="ECO:0000312" key="22">
    <source>
        <dbReference type="EMBL" id="CAB70943.1"/>
    </source>
</evidence>
<evidence type="ECO:0000312" key="23">
    <source>
        <dbReference type="Proteomes" id="UP000001973"/>
    </source>
</evidence>
<dbReference type="EMBL" id="AL939109">
    <property type="protein sequence ID" value="CAB70943.1"/>
    <property type="status" value="ALT_INIT"/>
    <property type="molecule type" value="Genomic_DNA"/>
</dbReference>
<dbReference type="EMBL" id="AF230491">
    <property type="protein sequence ID" value="AAF82065.2"/>
    <property type="molecule type" value="Genomic_DNA"/>
</dbReference>
<dbReference type="RefSeq" id="NP_625820.1">
    <property type="nucleotide sequence ID" value="NC_003888.3"/>
</dbReference>
<dbReference type="RefSeq" id="WP_004002642.1">
    <property type="nucleotide sequence ID" value="NZ_VNID01000021.1"/>
</dbReference>
<dbReference type="SMR" id="Q9L268"/>
<dbReference type="STRING" id="100226.gene:17759129"/>
<dbReference type="PaxDb" id="100226-SCO1541"/>
<dbReference type="DNASU" id="1096967"/>
<dbReference type="KEGG" id="sco:SCO1541"/>
<dbReference type="PATRIC" id="fig|100226.15.peg.1551"/>
<dbReference type="eggNOG" id="ENOG5032RFA">
    <property type="taxonomic scope" value="Bacteria"/>
</dbReference>
<dbReference type="HOGENOM" id="CLU_126599_0_1_11"/>
<dbReference type="InParanoid" id="Q9L268"/>
<dbReference type="OrthoDB" id="3853096at2"/>
<dbReference type="Proteomes" id="UP000001973">
    <property type="component" value="Chromosome"/>
</dbReference>
<dbReference type="GO" id="GO:0030428">
    <property type="term" value="C:cell septum"/>
    <property type="evidence" value="ECO:0000314"/>
    <property type="project" value="UniProtKB"/>
</dbReference>
<dbReference type="GO" id="GO:1990586">
    <property type="term" value="C:divisome complex"/>
    <property type="evidence" value="ECO:0000314"/>
    <property type="project" value="UniProtKB"/>
</dbReference>
<dbReference type="GO" id="GO:0031160">
    <property type="term" value="C:spore wall"/>
    <property type="evidence" value="ECO:0000315"/>
    <property type="project" value="UniProtKB"/>
</dbReference>
<dbReference type="GO" id="GO:1901112">
    <property type="term" value="P:actinorhodin biosynthetic process"/>
    <property type="evidence" value="ECO:0000315"/>
    <property type="project" value="UniProtKB"/>
</dbReference>
<dbReference type="GO" id="GO:0043936">
    <property type="term" value="P:asexual sporulation resulting in formation of a cellular spore"/>
    <property type="evidence" value="ECO:0000314"/>
    <property type="project" value="UniProtKB"/>
</dbReference>
<dbReference type="GO" id="GO:0051301">
    <property type="term" value="P:cell division"/>
    <property type="evidence" value="ECO:0000314"/>
    <property type="project" value="UniProtKB"/>
</dbReference>
<dbReference type="GO" id="GO:0090529">
    <property type="term" value="P:cell septum assembly"/>
    <property type="evidence" value="ECO:0000315"/>
    <property type="project" value="UniProtKB"/>
</dbReference>
<dbReference type="GO" id="GO:1902075">
    <property type="term" value="P:cellular response to salt"/>
    <property type="evidence" value="ECO:0000315"/>
    <property type="project" value="UniProtKB"/>
</dbReference>
<dbReference type="GO" id="GO:0000917">
    <property type="term" value="P:division septum assembly"/>
    <property type="evidence" value="ECO:0007669"/>
    <property type="project" value="UniProtKB-KW"/>
</dbReference>
<dbReference type="GO" id="GO:0030448">
    <property type="term" value="P:hyphal growth"/>
    <property type="evidence" value="ECO:0000314"/>
    <property type="project" value="UniProtKB"/>
</dbReference>
<dbReference type="GO" id="GO:0051781">
    <property type="term" value="P:positive regulation of cell division"/>
    <property type="evidence" value="ECO:0000314"/>
    <property type="project" value="UniProtKB"/>
</dbReference>
<dbReference type="GO" id="GO:0042244">
    <property type="term" value="P:spore wall assembly"/>
    <property type="evidence" value="ECO:0000314"/>
    <property type="project" value="UniProtKB"/>
</dbReference>
<dbReference type="GO" id="GO:0070590">
    <property type="term" value="P:spore wall biogenesis"/>
    <property type="evidence" value="ECO:0000270"/>
    <property type="project" value="UniProtKB"/>
</dbReference>
<dbReference type="GO" id="GO:0043934">
    <property type="term" value="P:sporulation"/>
    <property type="evidence" value="ECO:0000270"/>
    <property type="project" value="UniProtKB"/>
</dbReference>
<dbReference type="FunFam" id="2.30.31.20:FF:000001">
    <property type="entry name" value="SsgA family sporulation/cell division regulator"/>
    <property type="match status" value="1"/>
</dbReference>
<dbReference type="Gene3D" id="2.30.31.20">
    <property type="entry name" value="Sporulation-specific cell division protein SsgB"/>
    <property type="match status" value="1"/>
</dbReference>
<dbReference type="InterPro" id="IPR006776">
    <property type="entry name" value="SsgB"/>
</dbReference>
<dbReference type="InterPro" id="IPR038658">
    <property type="entry name" value="SsgB_sf"/>
</dbReference>
<dbReference type="Pfam" id="PF04686">
    <property type="entry name" value="SsgA"/>
    <property type="match status" value="1"/>
</dbReference>
<sequence>MNTTVSCELHLRLVVSSESSLPVPAGLRYDTADPYAVHATFHTGAEETVEWVFARDLLAEGLHRPTGTGDVRVWPSRSHGQGVVCIALSSPEGEALLEAPARALESFLKRTDAAVPPGTEHRHFDLDQELSHILAES</sequence>
<keyword id="KW-0131">Cell cycle</keyword>
<keyword id="KW-0132">Cell division</keyword>
<keyword id="KW-1185">Reference proteome</keyword>
<keyword id="KW-0717">Septation</keyword>
<keyword id="KW-0749">Sporulation</keyword>
<name>SSGB_STRCO</name>
<accession>Q9L268</accession>
<accession>Q9KIL5</accession>
<reference key="1">
    <citation type="journal article" date="2009" name="J. Biol. Chem.">
        <title>Structural and functional characterizations of SsgB, a conserved activator of developmental cell division in morphologically complex actinomycetes.</title>
        <authorList>
            <person name="Xu Q."/>
            <person name="Traag B.A."/>
            <person name="Willemse J."/>
            <person name="McMullan D."/>
            <person name="Miller M.D."/>
            <person name="Elsliger M.A."/>
            <person name="Abdubek P."/>
            <person name="Astakhova T."/>
            <person name="Axelrod H.L."/>
            <person name="Bakolitsa C."/>
            <person name="Carlton D."/>
            <person name="Chen C."/>
            <person name="Chiu H.J."/>
            <person name="Chruszcz M."/>
            <person name="Clayton T."/>
            <person name="Das D."/>
            <person name="Deller M.C."/>
            <person name="Duan L."/>
            <person name="Ellrott K."/>
            <person name="Ernst D."/>
            <person name="Farr C.L."/>
            <person name="Feuerhelm J."/>
            <person name="Grant J.C."/>
            <person name="Grzechnik A."/>
            <person name="Grzechnik S.K."/>
            <person name="Han G.W."/>
            <person name="Jaroszewski L."/>
            <person name="Jin K.K."/>
            <person name="Klock H.E."/>
            <person name="Knuth M.W."/>
            <person name="Kozbial P."/>
            <person name="Krishna S.S."/>
            <person name="Kumar A."/>
            <person name="Marciano D."/>
            <person name="Minor W."/>
            <person name="Mommaas A.M."/>
            <person name="Morse A.T."/>
            <person name="Nigoghossian E."/>
            <person name="Nopakun A."/>
            <person name="Okach L."/>
            <person name="Oommachen S."/>
            <person name="Paulsen J."/>
            <person name="Puckett C."/>
            <person name="Reyes R."/>
            <person name="Rife C.L."/>
            <person name="Sefcovic N."/>
            <person name="Tien H.J."/>
            <person name="Trame C.B."/>
            <person name="van den Bedem H."/>
            <person name="Wang S."/>
            <person name="Weekes D."/>
            <person name="Hodgson K.O."/>
            <person name="Wooley J."/>
            <person name="Deacon A.M."/>
            <person name="Godzik A."/>
            <person name="Lesley S.A."/>
            <person name="Wilson I.A."/>
            <person name="van Wezel G.P."/>
        </authorList>
    </citation>
    <scope>NUCLEOTIDE SEQUENCE [GENOMIC DNA]</scope>
    <scope>FUNCTION</scope>
    <scope>SUBCELLULAR LOCATION</scope>
    <scope>DISRUPTION PHENOTYPE</scope>
    <source>
        <strain evidence="15">ATCC BAA-471 / A3(2) / M145</strain>
    </source>
</reference>
<reference evidence="22 23" key="2">
    <citation type="journal article" date="2002" name="Nature">
        <title>Complete genome sequence of the model actinomycete Streptomyces coelicolor A3(2).</title>
        <authorList>
            <person name="Bentley S.D."/>
            <person name="Chater K.F."/>
            <person name="Cerdeno-Tarraga A.-M."/>
            <person name="Challis G.L."/>
            <person name="Thomson N.R."/>
            <person name="James K.D."/>
            <person name="Harris D.E."/>
            <person name="Quail M.A."/>
            <person name="Kieser H."/>
            <person name="Harper D."/>
            <person name="Bateman A."/>
            <person name="Brown S."/>
            <person name="Chandra G."/>
            <person name="Chen C.W."/>
            <person name="Collins M."/>
            <person name="Cronin A."/>
            <person name="Fraser A."/>
            <person name="Goble A."/>
            <person name="Hidalgo J."/>
            <person name="Hornsby T."/>
            <person name="Howarth S."/>
            <person name="Huang C.-H."/>
            <person name="Kieser T."/>
            <person name="Larke L."/>
            <person name="Murphy L.D."/>
            <person name="Oliver K."/>
            <person name="O'Neil S."/>
            <person name="Rabbinowitsch E."/>
            <person name="Rajandream M.A."/>
            <person name="Rutherford K.M."/>
            <person name="Rutter S."/>
            <person name="Seeger K."/>
            <person name="Saunders D."/>
            <person name="Sharp S."/>
            <person name="Squares R."/>
            <person name="Squares S."/>
            <person name="Taylor K."/>
            <person name="Warren T."/>
            <person name="Wietzorrek A."/>
            <person name="Woodward J.R."/>
            <person name="Barrell B.G."/>
            <person name="Parkhill J."/>
            <person name="Hopwood D.A."/>
        </authorList>
    </citation>
    <scope>NUCLEOTIDE SEQUENCE [LARGE SCALE GENOMIC DNA]</scope>
    <source>
        <strain evidence="23">ATCC BAA-471 / A3(2) / M145</strain>
    </source>
</reference>
<reference evidence="21" key="3">
    <citation type="journal article" date="2002" name="Mol. Genet. Genomics">
        <title>The stress-response sigma factor sigma(H) controls the expression of ssgB, a homologue of the sporulation-specific cell division gene ssgA, in Streptomyces coelicolor A3(2).</title>
        <authorList>
            <person name="Kormanec J."/>
            <person name="Sevcikova B."/>
        </authorList>
    </citation>
    <scope>NUCLEOTIDE SEQUENCE [GENOMIC DNA] OF 1-49</scope>
    <scope>INDUCTION BY SIGH</scope>
    <scope>DEVELOPMENTAL STAGE</scope>
    <source>
        <strain evidence="11">ATCC BAA-471 / A3(2) / M145</strain>
    </source>
</reference>
<reference evidence="21" key="4">
    <citation type="journal article" date="2003" name="Arch. Microbiol.">
        <title>The ssgB gene, encoding a member of the regulon of stress-response sigma factor sigmaH, is essential for aerial mycelium septation in Streptomyces coelicolor A3(2).</title>
        <authorList>
            <person name="Sevcikova B."/>
            <person name="Kormanec J."/>
        </authorList>
    </citation>
    <scope>DISRUPTION PHENOTYPE</scope>
    <source>
        <strain evidence="13">ATCC BAA-471 / A3(2) / M145</strain>
    </source>
</reference>
<reference key="5">
    <citation type="journal article" date="2003" name="FEMS Microbiol. Lett.">
        <title>The Streptomyces coelicolor ssgB gene is required for early stages of sporulation.</title>
        <authorList>
            <person name="Keijser B.J."/>
            <person name="Noens E.E."/>
            <person name="Kraal B."/>
            <person name="Koerten H.K."/>
            <person name="van Wezel G.P."/>
        </authorList>
    </citation>
    <scope>FUNCTION</scope>
    <scope>DISRUPTION PHENOTYPE</scope>
    <source>
        <strain evidence="12">ATCC BAA-471 / A3(2) / M145</strain>
    </source>
</reference>
<reference key="6">
    <citation type="journal article" date="2005" name="Mol. Microbiol.">
        <title>SsgA-like proteins determine the fate of peptidoglycan during sporulation of Streptomyces coelicolor.</title>
        <authorList>
            <person name="Noens E.E."/>
            <person name="Mersinias V."/>
            <person name="Traag B.A."/>
            <person name="Smith C.P."/>
            <person name="Koerten H.K."/>
            <person name="van Wezel G.P."/>
        </authorList>
    </citation>
    <scope>DEVELOPMENTAL STAGE</scope>
    <scope>DISRUPTION PHENOTYPE</scope>
    <scope>PHYLOGENETIC ANALYSIS</scope>
    <source>
        <strain evidence="14">ATCC BAA-471 / A3(2) / M145</strain>
    </source>
</reference>
<reference key="7">
    <citation type="journal article" date="2010" name="Mol. Microbiol.">
        <title>Genes essential for morphological development and antibiotic production in Streptomyces coelicolor are targets of BldD during vegetative growth.</title>
        <authorList>
            <person name="den Hengst C.D."/>
            <person name="Tran N.T."/>
            <person name="Bibb M.J."/>
            <person name="Chandra G."/>
            <person name="Leskiw B.K."/>
            <person name="Buttner M.J."/>
        </authorList>
    </citation>
    <scope>INDUCTION BY BLDD</scope>
    <source>
        <strain evidence="16">A3(2) / M600</strain>
    </source>
</reference>
<reference key="8">
    <citation type="journal article" date="2011" name="Genes Dev.">
        <title>Positive control of cell division: FtsZ is recruited by SsgB during sporulation of Streptomyces.</title>
        <authorList>
            <person name="Willemse J."/>
            <person name="Borst J.W."/>
            <person name="de Waal E."/>
            <person name="Bisseling T."/>
            <person name="van Wezel G.P."/>
        </authorList>
    </citation>
    <scope>FUNCTION</scope>
    <scope>INTERACTION WITH FTSZ AND SSGA</scope>
    <scope>SUBCELLULAR LOCATION</scope>
    <scope>DEVELOPMENTAL STAGE</scope>
    <scope>DISRUPTION PHENOTYPE</scope>
    <source>
        <strain evidence="17">ATCC BAA-471 / A3(2) / M145</strain>
    </source>
</reference>
<reference key="9">
    <citation type="journal article" date="2012" name="Antonie Van Leeuwenhoek">
        <title>Constitutive expression of ftsZ overrides the whi developmental genes to initiate sporulation of Streptomyces coelicolor.</title>
        <authorList>
            <person name="Willemse J."/>
            <person name="Mommaas A.M."/>
            <person name="van Wezel G.P."/>
        </authorList>
    </citation>
    <scope>DISRUPTION PHENOTYPE</scope>
    <source>
        <strain evidence="18">ATCC BAA-471 / A3(2) / M145</strain>
    </source>
</reference>
<reference key="10">
    <citation type="journal article" date="2015" name="Antonie Van Leeuwenhoek">
        <title>Transcriptional analysis of the cell division-related ssg genes in Streptomyces coelicolor reveals direct control of ssgR by AtrA.</title>
        <authorList>
            <person name="Kim S.H."/>
            <person name="Traag B.A."/>
            <person name="Hasan A.H."/>
            <person name="McDowall K.J."/>
            <person name="Kim B.G."/>
            <person name="van Wezel G.P."/>
        </authorList>
    </citation>
    <scope>DEVELOPMENTAL STAGE</scope>
    <scope>DISRUPTION PHENOTYPE</scope>
    <source>
        <strain evidence="19">ATCC BAA-471 / A3(2) / M145</strain>
    </source>
</reference>
<protein>
    <recommendedName>
        <fullName evidence="11">Sporulation-specific cell division protein SsgB</fullName>
    </recommendedName>
    <alternativeName>
        <fullName evidence="15">Sporulation of Streptomyces griseus-like protein B</fullName>
    </alternativeName>
    <alternativeName>
        <fullName evidence="14">SsgA-like protein B</fullName>
        <shortName evidence="14">SALP B</shortName>
    </alternativeName>
</protein>
<gene>
    <name evidence="11" type="primary">ssgB</name>
    <name evidence="22" type="ordered locus">SCO1541</name>
</gene>
<feature type="chain" id="PRO_0000435021" description="Sporulation-specific cell division protein SsgB">
    <location>
        <begin position="1"/>
        <end position="137"/>
    </location>
</feature>